<proteinExistence type="inferred from homology"/>
<protein>
    <recommendedName>
        <fullName evidence="1">Aspartyl/glutamyl-tRNA(Asn/Gln) amidotransferase subunit B</fullName>
        <shortName evidence="1">Asp/Glu-ADT subunit B</shortName>
        <ecNumber evidence="1">6.3.5.-</ecNumber>
    </recommendedName>
</protein>
<accession>A0KBH8</accession>
<name>GATB_BURCH</name>
<keyword id="KW-0067">ATP-binding</keyword>
<keyword id="KW-0436">Ligase</keyword>
<keyword id="KW-0547">Nucleotide-binding</keyword>
<keyword id="KW-0648">Protein biosynthesis</keyword>
<sequence length="491" mass="53532">MATQWEVVIGLETHAQLSTVSKIFSGASTQFGAEPNTQACPVDLALPGVLPVLNRGAVERAIRFGLAIGSTIAPRSIFARKNYFYPDLPKGYQISQYEIPVVQGGQITIQVPANEKAGKPAYEKTVNLTRAHLEEDAGKSLHEDFAGMTGIDLNRAGTPLLEIVTEPEMRSAAEAVAYAKALHALVVWLGICDGNMQEGSFRCDANVSVRPVGQEKFGTRAEIKNLNSFRFLEEAINYEVRRQIELIEDGGEVVQETRLYDPDKRETRSMRSKEDAHDYRYFPDPDLMPLVIGRDWVERVQSGMPELPAAMQQRFVDEYGVSAYDAGVLTSSKAMAAYFESVVAKAGAANAKIVANWLMGDVSSQLNRDGIEIDAIPVSAAQLALLLQRIADGTISNKIAKEIFATIWDEKATDEGAADRIIDAKGLKQISDTGALEAIIDEVLAANAKSVEEFRAGKEKAFNALIGQAMKATKGKANPQQVNELLKKKLG</sequence>
<evidence type="ECO:0000255" key="1">
    <source>
        <dbReference type="HAMAP-Rule" id="MF_00121"/>
    </source>
</evidence>
<reference key="1">
    <citation type="submission" date="2006-08" db="EMBL/GenBank/DDBJ databases">
        <title>Complete sequence of chromosome 1 of Burkholderia cenocepacia HI2424.</title>
        <authorList>
            <person name="Copeland A."/>
            <person name="Lucas S."/>
            <person name="Lapidus A."/>
            <person name="Barry K."/>
            <person name="Detter J.C."/>
            <person name="Glavina del Rio T."/>
            <person name="Hammon N."/>
            <person name="Israni S."/>
            <person name="Pitluck S."/>
            <person name="Chain P."/>
            <person name="Malfatti S."/>
            <person name="Shin M."/>
            <person name="Vergez L."/>
            <person name="Schmutz J."/>
            <person name="Larimer F."/>
            <person name="Land M."/>
            <person name="Hauser L."/>
            <person name="Kyrpides N."/>
            <person name="Kim E."/>
            <person name="LiPuma J.J."/>
            <person name="Gonzalez C.F."/>
            <person name="Konstantinidis K."/>
            <person name="Tiedje J.M."/>
            <person name="Richardson P."/>
        </authorList>
    </citation>
    <scope>NUCLEOTIDE SEQUENCE [LARGE SCALE GENOMIC DNA]</scope>
    <source>
        <strain>HI2424</strain>
    </source>
</reference>
<organism>
    <name type="scientific">Burkholderia cenocepacia (strain HI2424)</name>
    <dbReference type="NCBI Taxonomy" id="331272"/>
    <lineage>
        <taxon>Bacteria</taxon>
        <taxon>Pseudomonadati</taxon>
        <taxon>Pseudomonadota</taxon>
        <taxon>Betaproteobacteria</taxon>
        <taxon>Burkholderiales</taxon>
        <taxon>Burkholderiaceae</taxon>
        <taxon>Burkholderia</taxon>
        <taxon>Burkholderia cepacia complex</taxon>
    </lineage>
</organism>
<dbReference type="EC" id="6.3.5.-" evidence="1"/>
<dbReference type="EMBL" id="CP000458">
    <property type="protein sequence ID" value="ABK09855.1"/>
    <property type="molecule type" value="Genomic_DNA"/>
</dbReference>
<dbReference type="RefSeq" id="WP_006477480.1">
    <property type="nucleotide sequence ID" value="NC_008542.1"/>
</dbReference>
<dbReference type="SMR" id="A0KBH8"/>
<dbReference type="GeneID" id="83049904"/>
<dbReference type="KEGG" id="bch:Bcen2424_3107"/>
<dbReference type="HOGENOM" id="CLU_019240_0_0_4"/>
<dbReference type="GO" id="GO:0050566">
    <property type="term" value="F:asparaginyl-tRNA synthase (glutamine-hydrolyzing) activity"/>
    <property type="evidence" value="ECO:0007669"/>
    <property type="project" value="RHEA"/>
</dbReference>
<dbReference type="GO" id="GO:0005524">
    <property type="term" value="F:ATP binding"/>
    <property type="evidence" value="ECO:0007669"/>
    <property type="project" value="UniProtKB-KW"/>
</dbReference>
<dbReference type="GO" id="GO:0050567">
    <property type="term" value="F:glutaminyl-tRNA synthase (glutamine-hydrolyzing) activity"/>
    <property type="evidence" value="ECO:0007669"/>
    <property type="project" value="UniProtKB-UniRule"/>
</dbReference>
<dbReference type="GO" id="GO:0070681">
    <property type="term" value="P:glutaminyl-tRNAGln biosynthesis via transamidation"/>
    <property type="evidence" value="ECO:0007669"/>
    <property type="project" value="TreeGrafter"/>
</dbReference>
<dbReference type="GO" id="GO:0006412">
    <property type="term" value="P:translation"/>
    <property type="evidence" value="ECO:0007669"/>
    <property type="project" value="UniProtKB-UniRule"/>
</dbReference>
<dbReference type="FunFam" id="1.10.10.410:FF:000001">
    <property type="entry name" value="Aspartyl/glutamyl-tRNA(Asn/Gln) amidotransferase subunit B"/>
    <property type="match status" value="1"/>
</dbReference>
<dbReference type="FunFam" id="1.10.150.380:FF:000001">
    <property type="entry name" value="Aspartyl/glutamyl-tRNA(Asn/Gln) amidotransferase subunit B"/>
    <property type="match status" value="1"/>
</dbReference>
<dbReference type="Gene3D" id="1.10.10.410">
    <property type="match status" value="1"/>
</dbReference>
<dbReference type="Gene3D" id="1.10.150.380">
    <property type="entry name" value="GatB domain, N-terminal subdomain"/>
    <property type="match status" value="1"/>
</dbReference>
<dbReference type="HAMAP" id="MF_00121">
    <property type="entry name" value="GatB"/>
    <property type="match status" value="1"/>
</dbReference>
<dbReference type="InterPro" id="IPR017959">
    <property type="entry name" value="Asn/Gln-tRNA_amidoTrfase_suB/E"/>
</dbReference>
<dbReference type="InterPro" id="IPR006075">
    <property type="entry name" value="Asn/Gln-tRNA_Trfase_suB/E_cat"/>
</dbReference>
<dbReference type="InterPro" id="IPR018027">
    <property type="entry name" value="Asn/Gln_amidotransferase"/>
</dbReference>
<dbReference type="InterPro" id="IPR003789">
    <property type="entry name" value="Asn/Gln_tRNA_amidoTrase-B-like"/>
</dbReference>
<dbReference type="InterPro" id="IPR004413">
    <property type="entry name" value="GatB"/>
</dbReference>
<dbReference type="InterPro" id="IPR042114">
    <property type="entry name" value="GatB_C_1"/>
</dbReference>
<dbReference type="InterPro" id="IPR023168">
    <property type="entry name" value="GatB_Yqey_C_2"/>
</dbReference>
<dbReference type="InterPro" id="IPR017958">
    <property type="entry name" value="Gln-tRNA_amidoTrfase_suB_CS"/>
</dbReference>
<dbReference type="InterPro" id="IPR014746">
    <property type="entry name" value="Gln_synth/guanido_kin_cat_dom"/>
</dbReference>
<dbReference type="NCBIfam" id="TIGR00133">
    <property type="entry name" value="gatB"/>
    <property type="match status" value="1"/>
</dbReference>
<dbReference type="NCBIfam" id="NF004012">
    <property type="entry name" value="PRK05477.1-2"/>
    <property type="match status" value="1"/>
</dbReference>
<dbReference type="NCBIfam" id="NF004014">
    <property type="entry name" value="PRK05477.1-4"/>
    <property type="match status" value="1"/>
</dbReference>
<dbReference type="NCBIfam" id="NF004015">
    <property type="entry name" value="PRK05477.1-5"/>
    <property type="match status" value="1"/>
</dbReference>
<dbReference type="PANTHER" id="PTHR11659">
    <property type="entry name" value="GLUTAMYL-TRNA GLN AMIDOTRANSFERASE SUBUNIT B MITOCHONDRIAL AND PROKARYOTIC PET112-RELATED"/>
    <property type="match status" value="1"/>
</dbReference>
<dbReference type="PANTHER" id="PTHR11659:SF0">
    <property type="entry name" value="GLUTAMYL-TRNA(GLN) AMIDOTRANSFERASE SUBUNIT B, MITOCHONDRIAL"/>
    <property type="match status" value="1"/>
</dbReference>
<dbReference type="Pfam" id="PF02934">
    <property type="entry name" value="GatB_N"/>
    <property type="match status" value="1"/>
</dbReference>
<dbReference type="Pfam" id="PF02637">
    <property type="entry name" value="GatB_Yqey"/>
    <property type="match status" value="1"/>
</dbReference>
<dbReference type="SMART" id="SM00845">
    <property type="entry name" value="GatB_Yqey"/>
    <property type="match status" value="1"/>
</dbReference>
<dbReference type="SUPFAM" id="SSF89095">
    <property type="entry name" value="GatB/YqeY motif"/>
    <property type="match status" value="1"/>
</dbReference>
<dbReference type="SUPFAM" id="SSF55931">
    <property type="entry name" value="Glutamine synthetase/guanido kinase"/>
    <property type="match status" value="1"/>
</dbReference>
<dbReference type="PROSITE" id="PS01234">
    <property type="entry name" value="GATB"/>
    <property type="match status" value="1"/>
</dbReference>
<feature type="chain" id="PRO_1000015941" description="Aspartyl/glutamyl-tRNA(Asn/Gln) amidotransferase subunit B">
    <location>
        <begin position="1"/>
        <end position="491"/>
    </location>
</feature>
<comment type="function">
    <text evidence="1">Allows the formation of correctly charged Asn-tRNA(Asn) or Gln-tRNA(Gln) through the transamidation of misacylated Asp-tRNA(Asn) or Glu-tRNA(Gln) in organisms which lack either or both of asparaginyl-tRNA or glutaminyl-tRNA synthetases. The reaction takes place in the presence of glutamine and ATP through an activated phospho-Asp-tRNA(Asn) or phospho-Glu-tRNA(Gln).</text>
</comment>
<comment type="catalytic activity">
    <reaction evidence="1">
        <text>L-glutamyl-tRNA(Gln) + L-glutamine + ATP + H2O = L-glutaminyl-tRNA(Gln) + L-glutamate + ADP + phosphate + H(+)</text>
        <dbReference type="Rhea" id="RHEA:17521"/>
        <dbReference type="Rhea" id="RHEA-COMP:9681"/>
        <dbReference type="Rhea" id="RHEA-COMP:9684"/>
        <dbReference type="ChEBI" id="CHEBI:15377"/>
        <dbReference type="ChEBI" id="CHEBI:15378"/>
        <dbReference type="ChEBI" id="CHEBI:29985"/>
        <dbReference type="ChEBI" id="CHEBI:30616"/>
        <dbReference type="ChEBI" id="CHEBI:43474"/>
        <dbReference type="ChEBI" id="CHEBI:58359"/>
        <dbReference type="ChEBI" id="CHEBI:78520"/>
        <dbReference type="ChEBI" id="CHEBI:78521"/>
        <dbReference type="ChEBI" id="CHEBI:456216"/>
    </reaction>
</comment>
<comment type="catalytic activity">
    <reaction evidence="1">
        <text>L-aspartyl-tRNA(Asn) + L-glutamine + ATP + H2O = L-asparaginyl-tRNA(Asn) + L-glutamate + ADP + phosphate + 2 H(+)</text>
        <dbReference type="Rhea" id="RHEA:14513"/>
        <dbReference type="Rhea" id="RHEA-COMP:9674"/>
        <dbReference type="Rhea" id="RHEA-COMP:9677"/>
        <dbReference type="ChEBI" id="CHEBI:15377"/>
        <dbReference type="ChEBI" id="CHEBI:15378"/>
        <dbReference type="ChEBI" id="CHEBI:29985"/>
        <dbReference type="ChEBI" id="CHEBI:30616"/>
        <dbReference type="ChEBI" id="CHEBI:43474"/>
        <dbReference type="ChEBI" id="CHEBI:58359"/>
        <dbReference type="ChEBI" id="CHEBI:78515"/>
        <dbReference type="ChEBI" id="CHEBI:78516"/>
        <dbReference type="ChEBI" id="CHEBI:456216"/>
    </reaction>
</comment>
<comment type="subunit">
    <text evidence="1">Heterotrimer of A, B and C subunits.</text>
</comment>
<comment type="similarity">
    <text evidence="1">Belongs to the GatB/GatE family. GatB subfamily.</text>
</comment>
<gene>
    <name evidence="1" type="primary">gatB</name>
    <name type="ordered locus">Bcen2424_3107</name>
</gene>